<protein>
    <recommendedName>
        <fullName evidence="6">Cysteine synthase 1</fullName>
        <shortName>CS 1</shortName>
        <ecNumber evidence="1">2.5.1.-</ecNumber>
        <ecNumber evidence="1">2.5.1.47</ecNumber>
    </recommendedName>
    <alternativeName>
        <fullName>O-acetylserine (thiol)-lyase 1</fullName>
        <shortName>OAS-TL 1</shortName>
    </alternativeName>
    <alternativeName>
        <fullName>O-acetylserine sulfhydrylase 1</fullName>
    </alternativeName>
    <alternativeName>
        <fullName evidence="1">O-succinylserine sulfhydrylase</fullName>
    </alternativeName>
</protein>
<name>CYSK_NEUCR</name>
<dbReference type="EC" id="2.5.1.-" evidence="1"/>
<dbReference type="EC" id="2.5.1.47" evidence="1"/>
<dbReference type="EMBL" id="CM002238">
    <property type="protein sequence ID" value="EAA28107.1"/>
    <property type="molecule type" value="Genomic_DNA"/>
</dbReference>
<dbReference type="RefSeq" id="XP_957343.1">
    <property type="nucleotide sequence ID" value="XM_952250.2"/>
</dbReference>
<dbReference type="SMR" id="Q7RYW6"/>
<dbReference type="STRING" id="367110.Q7RYW6"/>
<dbReference type="PaxDb" id="5141-EFNCRP00000006251"/>
<dbReference type="EnsemblFungi" id="EAA28107">
    <property type="protein sequence ID" value="EAA28107"/>
    <property type="gene ID" value="NCU06452"/>
</dbReference>
<dbReference type="GeneID" id="3873512"/>
<dbReference type="KEGG" id="ncr:NCU06452"/>
<dbReference type="VEuPathDB" id="FungiDB:NCU06452"/>
<dbReference type="HOGENOM" id="CLU_021018_1_0_1"/>
<dbReference type="InParanoid" id="Q7RYW6"/>
<dbReference type="OMA" id="VVTVFWD"/>
<dbReference type="OrthoDB" id="10259545at2759"/>
<dbReference type="UniPathway" id="UPA00136">
    <property type="reaction ID" value="UER00200"/>
</dbReference>
<dbReference type="Proteomes" id="UP000001805">
    <property type="component" value="Chromosome 3, Linkage Group III"/>
</dbReference>
<dbReference type="GO" id="GO:0005737">
    <property type="term" value="C:cytoplasm"/>
    <property type="evidence" value="ECO:0000318"/>
    <property type="project" value="GO_Central"/>
</dbReference>
<dbReference type="GO" id="GO:0005739">
    <property type="term" value="C:mitochondrion"/>
    <property type="evidence" value="ECO:0007669"/>
    <property type="project" value="UniProtKB-SubCell"/>
</dbReference>
<dbReference type="GO" id="GO:0004124">
    <property type="term" value="F:cysteine synthase activity"/>
    <property type="evidence" value="ECO:0000318"/>
    <property type="project" value="GO_Central"/>
</dbReference>
<dbReference type="GO" id="GO:0141223">
    <property type="term" value="F:cysteine synthase activity, acting on O-succinyl-L-serine"/>
    <property type="evidence" value="ECO:0007669"/>
    <property type="project" value="RHEA"/>
</dbReference>
<dbReference type="GO" id="GO:0006535">
    <property type="term" value="P:cysteine biosynthetic process from serine"/>
    <property type="evidence" value="ECO:0000318"/>
    <property type="project" value="GO_Central"/>
</dbReference>
<dbReference type="CDD" id="cd01561">
    <property type="entry name" value="CBS_like"/>
    <property type="match status" value="1"/>
</dbReference>
<dbReference type="FunFam" id="3.40.50.1100:FF:000011">
    <property type="entry name" value="Cysteine synthase (o-acetylserine)"/>
    <property type="match status" value="1"/>
</dbReference>
<dbReference type="FunFam" id="3.40.50.1100:FF:000049">
    <property type="entry name" value="Cysteine synthase, putative"/>
    <property type="match status" value="1"/>
</dbReference>
<dbReference type="Gene3D" id="3.40.50.1100">
    <property type="match status" value="2"/>
</dbReference>
<dbReference type="InterPro" id="IPR050214">
    <property type="entry name" value="Cys_Synth/Cystath_Beta-Synth"/>
</dbReference>
<dbReference type="InterPro" id="IPR001216">
    <property type="entry name" value="P-phosphate_BS"/>
</dbReference>
<dbReference type="InterPro" id="IPR001926">
    <property type="entry name" value="TrpB-like_PALP"/>
</dbReference>
<dbReference type="InterPro" id="IPR036052">
    <property type="entry name" value="TrpB-like_PALP_sf"/>
</dbReference>
<dbReference type="NCBIfam" id="NF007989">
    <property type="entry name" value="PRK10717.1"/>
    <property type="match status" value="1"/>
</dbReference>
<dbReference type="PANTHER" id="PTHR10314">
    <property type="entry name" value="CYSTATHIONINE BETA-SYNTHASE"/>
    <property type="match status" value="1"/>
</dbReference>
<dbReference type="Pfam" id="PF00291">
    <property type="entry name" value="PALP"/>
    <property type="match status" value="1"/>
</dbReference>
<dbReference type="SUPFAM" id="SSF53686">
    <property type="entry name" value="Tryptophan synthase beta subunit-like PLP-dependent enzymes"/>
    <property type="match status" value="1"/>
</dbReference>
<dbReference type="PROSITE" id="PS00901">
    <property type="entry name" value="CYS_SYNTHASE"/>
    <property type="match status" value="1"/>
</dbReference>
<reference key="1">
    <citation type="journal article" date="2003" name="Nature">
        <title>The genome sequence of the filamentous fungus Neurospora crassa.</title>
        <authorList>
            <person name="Galagan J.E."/>
            <person name="Calvo S.E."/>
            <person name="Borkovich K.A."/>
            <person name="Selker E.U."/>
            <person name="Read N.D."/>
            <person name="Jaffe D.B."/>
            <person name="FitzHugh W."/>
            <person name="Ma L.-J."/>
            <person name="Smirnov S."/>
            <person name="Purcell S."/>
            <person name="Rehman B."/>
            <person name="Elkins T."/>
            <person name="Engels R."/>
            <person name="Wang S."/>
            <person name="Nielsen C.B."/>
            <person name="Butler J."/>
            <person name="Endrizzi M."/>
            <person name="Qui D."/>
            <person name="Ianakiev P."/>
            <person name="Bell-Pedersen D."/>
            <person name="Nelson M.A."/>
            <person name="Werner-Washburne M."/>
            <person name="Selitrennikoff C.P."/>
            <person name="Kinsey J.A."/>
            <person name="Braun E.L."/>
            <person name="Zelter A."/>
            <person name="Schulte U."/>
            <person name="Kothe G.O."/>
            <person name="Jedd G."/>
            <person name="Mewes H.-W."/>
            <person name="Staben C."/>
            <person name="Marcotte E."/>
            <person name="Greenberg D."/>
            <person name="Roy A."/>
            <person name="Foley K."/>
            <person name="Naylor J."/>
            <person name="Stange-Thomann N."/>
            <person name="Barrett R."/>
            <person name="Gnerre S."/>
            <person name="Kamal M."/>
            <person name="Kamvysselis M."/>
            <person name="Mauceli E.W."/>
            <person name="Bielke C."/>
            <person name="Rudd S."/>
            <person name="Frishman D."/>
            <person name="Krystofova S."/>
            <person name="Rasmussen C."/>
            <person name="Metzenberg R.L."/>
            <person name="Perkins D.D."/>
            <person name="Kroken S."/>
            <person name="Cogoni C."/>
            <person name="Macino G."/>
            <person name="Catcheside D.E.A."/>
            <person name="Li W."/>
            <person name="Pratt R.J."/>
            <person name="Osmani S.A."/>
            <person name="DeSouza C.P.C."/>
            <person name="Glass N.L."/>
            <person name="Orbach M.J."/>
            <person name="Berglund J.A."/>
            <person name="Voelker R."/>
            <person name="Yarden O."/>
            <person name="Plamann M."/>
            <person name="Seiler S."/>
            <person name="Dunlap J.C."/>
            <person name="Radford A."/>
            <person name="Aramayo R."/>
            <person name="Natvig D.O."/>
            <person name="Alex L.A."/>
            <person name="Mannhaupt G."/>
            <person name="Ebbole D.J."/>
            <person name="Freitag M."/>
            <person name="Paulsen I."/>
            <person name="Sachs M.S."/>
            <person name="Lander E.S."/>
            <person name="Nusbaum C."/>
            <person name="Birren B.W."/>
        </authorList>
    </citation>
    <scope>NUCLEOTIDE SEQUENCE [LARGE SCALE GENOMIC DNA]</scope>
    <source>
        <strain>ATCC 24698 / 74-OR23-1A / CBS 708.71 / DSM 1257 / FGSC 987</strain>
    </source>
</reference>
<reference key="2">
    <citation type="journal article" date="2004" name="Adv. Genet.">
        <title>Metabolic highways of Neurospora crassa revisited.</title>
        <authorList>
            <person name="Radford A."/>
        </authorList>
    </citation>
    <scope>PATHWAY</scope>
</reference>
<reference key="3">
    <citation type="journal article" date="2011" name="Fungal Genet. Biol.">
        <title>Gel-based mass spectrometric and computational approaches to the mitochondrial proteome of Neurospora.</title>
        <authorList>
            <person name="Keeping A."/>
            <person name="Deabreu D."/>
            <person name="Dibernardo M."/>
            <person name="Collins R.A."/>
        </authorList>
    </citation>
    <scope>SUBCELLULAR LOCATION [LARGE SCALE ANALYSIS]</scope>
</reference>
<accession>Q7RYW6</accession>
<gene>
    <name type="primary">cys-17</name>
    <name type="ORF">NCU06452</name>
</gene>
<feature type="transit peptide" description="Mitochondrion" evidence="4">
    <location>
        <begin position="1"/>
        <end position="16"/>
    </location>
</feature>
<feature type="chain" id="PRO_0000436604" description="Cysteine synthase 1" evidence="4">
    <location>
        <begin position="17"/>
        <end position="376"/>
    </location>
</feature>
<feature type="binding site" evidence="3">
    <location>
        <position position="109"/>
    </location>
    <ligand>
        <name>pyridoxal 5'-phosphate</name>
        <dbReference type="ChEBI" id="CHEBI:597326"/>
    </ligand>
</feature>
<feature type="binding site" evidence="3">
    <location>
        <begin position="215"/>
        <end position="219"/>
    </location>
    <ligand>
        <name>pyridoxal 5'-phosphate</name>
        <dbReference type="ChEBI" id="CHEBI:597326"/>
    </ligand>
</feature>
<feature type="binding site" evidence="3">
    <location>
        <position position="314"/>
    </location>
    <ligand>
        <name>pyridoxal 5'-phosphate</name>
        <dbReference type="ChEBI" id="CHEBI:597326"/>
    </ligand>
</feature>
<feature type="modified residue" description="N6-(pyridoxal phosphate)lysine" evidence="3">
    <location>
        <position position="79"/>
    </location>
</feature>
<sequence length="376" mass="40711">MFRHGVRTFATTSLRRMAAVAPQEPSQYLLNVSKAQGIAKGLTGAIGNTPLIRLNRLSEETGCEILGKAEFMNPGGSVKDRAALYVVKDAEERGLLRPGGTVVEGTAGNTGIGLAHVCRSKGYKLVIYMPNTQSQGKIDLLRLLGAEVYPVPAVAFENPENYNHQARRHAERLDNAVWTNQFDNIANRRAHIETTGPEIWAQTGGKVDAFTCATGTGGTFAGTTRYLKEVSGGRVKAFLADPPGSVLHSYFSSGGKLIERSGSSITEGIGQGRITDNLKQDVDLVDGSMTISDEKTIEMVYRCLDEEGLYLGASSTLNVVAAKEVAEKLGKGSTVVTMLCDGAYRYADRLFSRKWLEQKNLLGAIPEHLQKYIVLP</sequence>
<comment type="function">
    <text evidence="1">Catalyzes the conversion of O-succinyl-L-serine into cysteine, the last step in the cysteine biosynthesis pathway. Can also use O-acetyl-L-serine.</text>
</comment>
<comment type="catalytic activity">
    <reaction evidence="1">
        <text>O-succinyl-L-serine + hydrogen sulfide = L-cysteine + succinate</text>
        <dbReference type="Rhea" id="RHEA:53816"/>
        <dbReference type="ChEBI" id="CHEBI:29919"/>
        <dbReference type="ChEBI" id="CHEBI:30031"/>
        <dbReference type="ChEBI" id="CHEBI:35235"/>
        <dbReference type="ChEBI" id="CHEBI:136856"/>
    </reaction>
</comment>
<comment type="catalytic activity">
    <reaction evidence="1">
        <text>O-acetyl-L-serine + hydrogen sulfide = L-cysteine + acetate</text>
        <dbReference type="Rhea" id="RHEA:14829"/>
        <dbReference type="ChEBI" id="CHEBI:29919"/>
        <dbReference type="ChEBI" id="CHEBI:30089"/>
        <dbReference type="ChEBI" id="CHEBI:35235"/>
        <dbReference type="ChEBI" id="CHEBI:58340"/>
        <dbReference type="EC" id="2.5.1.47"/>
    </reaction>
</comment>
<comment type="cofactor">
    <cofactor evidence="2">
        <name>pyridoxal 5'-phosphate</name>
        <dbReference type="ChEBI" id="CHEBI:597326"/>
    </cofactor>
</comment>
<comment type="pathway">
    <text evidence="7">Amino-acid biosynthesis; L-cysteine biosynthesis; L-cysteine from L-serine: step 2/2.</text>
</comment>
<comment type="subcellular location">
    <subcellularLocation>
        <location evidence="5">Mitochondrion</location>
    </subcellularLocation>
</comment>
<comment type="similarity">
    <text evidence="6">Belongs to the cysteine synthase/cystathionine beta-synthase family.</text>
</comment>
<organism>
    <name type="scientific">Neurospora crassa (strain ATCC 24698 / 74-OR23-1A / CBS 708.71 / DSM 1257 / FGSC 987)</name>
    <dbReference type="NCBI Taxonomy" id="367110"/>
    <lineage>
        <taxon>Eukaryota</taxon>
        <taxon>Fungi</taxon>
        <taxon>Dikarya</taxon>
        <taxon>Ascomycota</taxon>
        <taxon>Pezizomycotina</taxon>
        <taxon>Sordariomycetes</taxon>
        <taxon>Sordariomycetidae</taxon>
        <taxon>Sordariales</taxon>
        <taxon>Sordariaceae</taxon>
        <taxon>Neurospora</taxon>
    </lineage>
</organism>
<keyword id="KW-0028">Amino-acid biosynthesis</keyword>
<keyword id="KW-0198">Cysteine biosynthesis</keyword>
<keyword id="KW-0496">Mitochondrion</keyword>
<keyword id="KW-0663">Pyridoxal phosphate</keyword>
<keyword id="KW-1185">Reference proteome</keyword>
<keyword id="KW-0808">Transferase</keyword>
<keyword id="KW-0809">Transit peptide</keyword>
<proteinExistence type="inferred from homology"/>
<evidence type="ECO:0000250" key="1">
    <source>
        <dbReference type="UniProtKB" id="O59701"/>
    </source>
</evidence>
<evidence type="ECO:0000250" key="2">
    <source>
        <dbReference type="UniProtKB" id="P0ABK5"/>
    </source>
</evidence>
<evidence type="ECO:0000250" key="3">
    <source>
        <dbReference type="UniProtKB" id="P16703"/>
    </source>
</evidence>
<evidence type="ECO:0000255" key="4"/>
<evidence type="ECO:0000269" key="5">
    <source>
    </source>
</evidence>
<evidence type="ECO:0000305" key="6"/>
<evidence type="ECO:0000305" key="7">
    <source>
    </source>
</evidence>